<sequence>MHIKADEISTIIKEQIQNYSQRIETTEVGTVLSVGDGIARVYGVQDVMSMELLEFPGNLLGMVLNLEQDNVGVALLGDDTGVEEGSTVKRTGRIFSVPVGDAVTGRVLNPLGQPLDGLGPLNATEKKPVEVKAPSIIDRKSIYEPLVTGIKAIDAMTPIGRGQRELIIGDRQTGKTSICIDAILAQKESGVHCFYVAIGQKASTVALVADTLRKHGAMEYTTIIAATASDPAPLQYISPYSGCTMAEYYRDHGQHALIVYDDLSKQAVAYRQMSLLLRRPPGREAFPGDVFYLHSRLLERAAKLSDELGGGSLTALPIIETQAGDVSAYIPTNVISITDGQVYLEPNLFNAGVRPAINVGLSVSRVGGAAQTKAMKQVSGTMRLDLAQYRELAAFAQFSSDLDKETQTKLERGARLVELLKQPQYQPMQLPEQVIVMFAATKGFMDDIPIDHIQNFSKTLIEYIQTMNPKILENISTQQALNEELDQQLTTAITECKKTFLPMNKR</sequence>
<reference key="1">
    <citation type="submission" date="2005-11" db="EMBL/GenBank/DDBJ databases">
        <title>The complete genome sequence of Lawsonia intracellularis: the causative agent of proliferative enteropathy.</title>
        <authorList>
            <person name="Kaur K."/>
            <person name="Zhang Q."/>
            <person name="Beckler D."/>
            <person name="Munir S."/>
            <person name="Li L."/>
            <person name="Kinsley K."/>
            <person name="Herron L."/>
            <person name="Peterson A."/>
            <person name="May B."/>
            <person name="Singh S."/>
            <person name="Gebhart C."/>
            <person name="Kapur V."/>
        </authorList>
    </citation>
    <scope>NUCLEOTIDE SEQUENCE [LARGE SCALE GENOMIC DNA]</scope>
    <source>
        <strain>PHE/MN1-00</strain>
    </source>
</reference>
<organism>
    <name type="scientific">Lawsonia intracellularis (strain PHE/MN1-00)</name>
    <dbReference type="NCBI Taxonomy" id="363253"/>
    <lineage>
        <taxon>Bacteria</taxon>
        <taxon>Pseudomonadati</taxon>
        <taxon>Thermodesulfobacteriota</taxon>
        <taxon>Desulfovibrionia</taxon>
        <taxon>Desulfovibrionales</taxon>
        <taxon>Desulfovibrionaceae</taxon>
        <taxon>Lawsonia</taxon>
    </lineage>
</organism>
<dbReference type="EC" id="7.1.2.2" evidence="1"/>
<dbReference type="EMBL" id="AM180252">
    <property type="protein sequence ID" value="CAJ54457.1"/>
    <property type="molecule type" value="Genomic_DNA"/>
</dbReference>
<dbReference type="RefSeq" id="WP_011526486.1">
    <property type="nucleotide sequence ID" value="NC_008011.1"/>
</dbReference>
<dbReference type="SMR" id="Q1MRB9"/>
<dbReference type="STRING" id="363253.LI0401"/>
<dbReference type="KEGG" id="lip:LI0401"/>
<dbReference type="eggNOG" id="COG0056">
    <property type="taxonomic scope" value="Bacteria"/>
</dbReference>
<dbReference type="HOGENOM" id="CLU_010091_2_1_7"/>
<dbReference type="OrthoDB" id="9803053at2"/>
<dbReference type="Proteomes" id="UP000002430">
    <property type="component" value="Chromosome"/>
</dbReference>
<dbReference type="GO" id="GO:0005886">
    <property type="term" value="C:plasma membrane"/>
    <property type="evidence" value="ECO:0007669"/>
    <property type="project" value="UniProtKB-SubCell"/>
</dbReference>
<dbReference type="GO" id="GO:0045259">
    <property type="term" value="C:proton-transporting ATP synthase complex"/>
    <property type="evidence" value="ECO:0007669"/>
    <property type="project" value="UniProtKB-KW"/>
</dbReference>
<dbReference type="GO" id="GO:0043531">
    <property type="term" value="F:ADP binding"/>
    <property type="evidence" value="ECO:0007669"/>
    <property type="project" value="TreeGrafter"/>
</dbReference>
<dbReference type="GO" id="GO:0005524">
    <property type="term" value="F:ATP binding"/>
    <property type="evidence" value="ECO:0007669"/>
    <property type="project" value="UniProtKB-UniRule"/>
</dbReference>
<dbReference type="GO" id="GO:0046933">
    <property type="term" value="F:proton-transporting ATP synthase activity, rotational mechanism"/>
    <property type="evidence" value="ECO:0007669"/>
    <property type="project" value="UniProtKB-UniRule"/>
</dbReference>
<dbReference type="CDD" id="cd18113">
    <property type="entry name" value="ATP-synt_F1_alpha_C"/>
    <property type="match status" value="1"/>
</dbReference>
<dbReference type="CDD" id="cd18116">
    <property type="entry name" value="ATP-synt_F1_alpha_N"/>
    <property type="match status" value="1"/>
</dbReference>
<dbReference type="CDD" id="cd01132">
    <property type="entry name" value="F1-ATPase_alpha_CD"/>
    <property type="match status" value="1"/>
</dbReference>
<dbReference type="FunFam" id="1.20.150.20:FF:000001">
    <property type="entry name" value="ATP synthase subunit alpha"/>
    <property type="match status" value="1"/>
</dbReference>
<dbReference type="FunFam" id="2.40.30.20:FF:000001">
    <property type="entry name" value="ATP synthase subunit alpha"/>
    <property type="match status" value="1"/>
</dbReference>
<dbReference type="FunFam" id="3.40.50.300:FF:000002">
    <property type="entry name" value="ATP synthase subunit alpha"/>
    <property type="match status" value="1"/>
</dbReference>
<dbReference type="Gene3D" id="2.40.30.20">
    <property type="match status" value="1"/>
</dbReference>
<dbReference type="Gene3D" id="1.20.150.20">
    <property type="entry name" value="ATP synthase alpha/beta chain, C-terminal domain"/>
    <property type="match status" value="1"/>
</dbReference>
<dbReference type="Gene3D" id="3.40.50.300">
    <property type="entry name" value="P-loop containing nucleotide triphosphate hydrolases"/>
    <property type="match status" value="1"/>
</dbReference>
<dbReference type="HAMAP" id="MF_01346">
    <property type="entry name" value="ATP_synth_alpha_bact"/>
    <property type="match status" value="1"/>
</dbReference>
<dbReference type="InterPro" id="IPR023366">
    <property type="entry name" value="ATP_synth_asu-like_sf"/>
</dbReference>
<dbReference type="InterPro" id="IPR000793">
    <property type="entry name" value="ATP_synth_asu_C"/>
</dbReference>
<dbReference type="InterPro" id="IPR038376">
    <property type="entry name" value="ATP_synth_asu_C_sf"/>
</dbReference>
<dbReference type="InterPro" id="IPR033732">
    <property type="entry name" value="ATP_synth_F1_a_nt-bd_dom"/>
</dbReference>
<dbReference type="InterPro" id="IPR005294">
    <property type="entry name" value="ATP_synth_F1_asu"/>
</dbReference>
<dbReference type="InterPro" id="IPR020003">
    <property type="entry name" value="ATPase_a/bsu_AS"/>
</dbReference>
<dbReference type="InterPro" id="IPR004100">
    <property type="entry name" value="ATPase_F1/V1/A1_a/bsu_N"/>
</dbReference>
<dbReference type="InterPro" id="IPR036121">
    <property type="entry name" value="ATPase_F1/V1/A1_a/bsu_N_sf"/>
</dbReference>
<dbReference type="InterPro" id="IPR000194">
    <property type="entry name" value="ATPase_F1/V1/A1_a/bsu_nucl-bd"/>
</dbReference>
<dbReference type="InterPro" id="IPR027417">
    <property type="entry name" value="P-loop_NTPase"/>
</dbReference>
<dbReference type="NCBIfam" id="TIGR00962">
    <property type="entry name" value="atpA"/>
    <property type="match status" value="1"/>
</dbReference>
<dbReference type="NCBIfam" id="NF009884">
    <property type="entry name" value="PRK13343.1"/>
    <property type="match status" value="1"/>
</dbReference>
<dbReference type="PANTHER" id="PTHR48082">
    <property type="entry name" value="ATP SYNTHASE SUBUNIT ALPHA, MITOCHONDRIAL"/>
    <property type="match status" value="1"/>
</dbReference>
<dbReference type="PANTHER" id="PTHR48082:SF2">
    <property type="entry name" value="ATP SYNTHASE SUBUNIT ALPHA, MITOCHONDRIAL"/>
    <property type="match status" value="1"/>
</dbReference>
<dbReference type="Pfam" id="PF00006">
    <property type="entry name" value="ATP-synt_ab"/>
    <property type="match status" value="1"/>
</dbReference>
<dbReference type="Pfam" id="PF00306">
    <property type="entry name" value="ATP-synt_ab_C"/>
    <property type="match status" value="1"/>
</dbReference>
<dbReference type="Pfam" id="PF02874">
    <property type="entry name" value="ATP-synt_ab_N"/>
    <property type="match status" value="1"/>
</dbReference>
<dbReference type="PIRSF" id="PIRSF039088">
    <property type="entry name" value="F_ATPase_subunit_alpha"/>
    <property type="match status" value="1"/>
</dbReference>
<dbReference type="SUPFAM" id="SSF47917">
    <property type="entry name" value="C-terminal domain of alpha and beta subunits of F1 ATP synthase"/>
    <property type="match status" value="1"/>
</dbReference>
<dbReference type="SUPFAM" id="SSF50615">
    <property type="entry name" value="N-terminal domain of alpha and beta subunits of F1 ATP synthase"/>
    <property type="match status" value="1"/>
</dbReference>
<dbReference type="SUPFAM" id="SSF52540">
    <property type="entry name" value="P-loop containing nucleoside triphosphate hydrolases"/>
    <property type="match status" value="1"/>
</dbReference>
<dbReference type="PROSITE" id="PS00152">
    <property type="entry name" value="ATPASE_ALPHA_BETA"/>
    <property type="match status" value="1"/>
</dbReference>
<accession>Q1MRB9</accession>
<keyword id="KW-0066">ATP synthesis</keyword>
<keyword id="KW-0067">ATP-binding</keyword>
<keyword id="KW-1003">Cell membrane</keyword>
<keyword id="KW-0139">CF(1)</keyword>
<keyword id="KW-0375">Hydrogen ion transport</keyword>
<keyword id="KW-0406">Ion transport</keyword>
<keyword id="KW-0472">Membrane</keyword>
<keyword id="KW-0547">Nucleotide-binding</keyword>
<keyword id="KW-1185">Reference proteome</keyword>
<keyword id="KW-1278">Translocase</keyword>
<keyword id="KW-0813">Transport</keyword>
<evidence type="ECO:0000255" key="1">
    <source>
        <dbReference type="HAMAP-Rule" id="MF_01346"/>
    </source>
</evidence>
<feature type="chain" id="PRO_0000256095" description="ATP synthase subunit alpha">
    <location>
        <begin position="1"/>
        <end position="506"/>
    </location>
</feature>
<feature type="binding site" evidence="1">
    <location>
        <begin position="169"/>
        <end position="176"/>
    </location>
    <ligand>
        <name>ATP</name>
        <dbReference type="ChEBI" id="CHEBI:30616"/>
    </ligand>
</feature>
<feature type="site" description="Required for activity" evidence="1">
    <location>
        <position position="362"/>
    </location>
</feature>
<proteinExistence type="inferred from homology"/>
<gene>
    <name evidence="1" type="primary">atpA</name>
    <name type="ordered locus">LI0401</name>
</gene>
<name>ATPA_LAWIP</name>
<protein>
    <recommendedName>
        <fullName evidence="1">ATP synthase subunit alpha</fullName>
        <ecNumber evidence="1">7.1.2.2</ecNumber>
    </recommendedName>
    <alternativeName>
        <fullName evidence="1">ATP synthase F1 sector subunit alpha</fullName>
    </alternativeName>
    <alternativeName>
        <fullName evidence="1">F-ATPase subunit alpha</fullName>
    </alternativeName>
</protein>
<comment type="function">
    <text evidence="1">Produces ATP from ADP in the presence of a proton gradient across the membrane. The alpha chain is a regulatory subunit.</text>
</comment>
<comment type="catalytic activity">
    <reaction evidence="1">
        <text>ATP + H2O + 4 H(+)(in) = ADP + phosphate + 5 H(+)(out)</text>
        <dbReference type="Rhea" id="RHEA:57720"/>
        <dbReference type="ChEBI" id="CHEBI:15377"/>
        <dbReference type="ChEBI" id="CHEBI:15378"/>
        <dbReference type="ChEBI" id="CHEBI:30616"/>
        <dbReference type="ChEBI" id="CHEBI:43474"/>
        <dbReference type="ChEBI" id="CHEBI:456216"/>
        <dbReference type="EC" id="7.1.2.2"/>
    </reaction>
</comment>
<comment type="subunit">
    <text evidence="1">F-type ATPases have 2 components, CF(1) - the catalytic core - and CF(0) - the membrane proton channel. CF(1) has five subunits: alpha(3), beta(3), gamma(1), delta(1), epsilon(1). CF(0) has three main subunits: a(1), b(2) and c(9-12). The alpha and beta chains form an alternating ring which encloses part of the gamma chain. CF(1) is attached to CF(0) by a central stalk formed by the gamma and epsilon chains, while a peripheral stalk is formed by the delta and b chains.</text>
</comment>
<comment type="subcellular location">
    <subcellularLocation>
        <location evidence="1">Cell membrane</location>
        <topology evidence="1">Peripheral membrane protein</topology>
    </subcellularLocation>
</comment>
<comment type="similarity">
    <text evidence="1">Belongs to the ATPase alpha/beta chains family.</text>
</comment>